<keyword id="KW-0067">ATP-binding</keyword>
<keyword id="KW-0106">Calcium</keyword>
<keyword id="KW-1015">Disulfide bond</keyword>
<keyword id="KW-0245">EGF-like domain</keyword>
<keyword id="KW-0325">Glycoprotein</keyword>
<keyword id="KW-0418">Kinase</keyword>
<keyword id="KW-0472">Membrane</keyword>
<keyword id="KW-0547">Nucleotide-binding</keyword>
<keyword id="KW-0597">Phosphoprotein</keyword>
<keyword id="KW-1185">Reference proteome</keyword>
<keyword id="KW-0677">Repeat</keyword>
<keyword id="KW-0723">Serine/threonine-protein kinase</keyword>
<keyword id="KW-0732">Signal</keyword>
<keyword id="KW-0808">Transferase</keyword>
<keyword id="KW-0812">Transmembrane</keyword>
<keyword id="KW-1133">Transmembrane helix</keyword>
<organism>
    <name type="scientific">Arabidopsis thaliana</name>
    <name type="common">Mouse-ear cress</name>
    <dbReference type="NCBI Taxonomy" id="3702"/>
    <lineage>
        <taxon>Eukaryota</taxon>
        <taxon>Viridiplantae</taxon>
        <taxon>Streptophyta</taxon>
        <taxon>Embryophyta</taxon>
        <taxon>Tracheophyta</taxon>
        <taxon>Spermatophyta</taxon>
        <taxon>Magnoliopsida</taxon>
        <taxon>eudicotyledons</taxon>
        <taxon>Gunneridae</taxon>
        <taxon>Pentapetalae</taxon>
        <taxon>rosids</taxon>
        <taxon>malvids</taxon>
        <taxon>Brassicales</taxon>
        <taxon>Brassicaceae</taxon>
        <taxon>Camelineae</taxon>
        <taxon>Arabidopsis</taxon>
    </lineage>
</organism>
<protein>
    <recommendedName>
        <fullName>Wall-associated receptor kinase 4</fullName>
        <ecNumber>2.7.11.-</ecNumber>
    </recommendedName>
</protein>
<reference key="1">
    <citation type="journal article" date="1999" name="Plant Mol. Biol.">
        <title>A cluster of five cell wall-associated receptor kinase genes, Wak1-5, are expressed in specific organs of Arabidopsis.</title>
        <authorList>
            <person name="He Z.-H."/>
            <person name="Cheeseman I."/>
            <person name="He D."/>
            <person name="Kohorn B.D."/>
        </authorList>
    </citation>
    <scope>NUCLEOTIDE SEQUENCE [GENOMIC DNA]</scope>
    <scope>TISSUE SPECIFICITY</scope>
    <source>
        <strain>cv. Columbia</strain>
    </source>
</reference>
<reference key="2">
    <citation type="journal article" date="2000" name="Nature">
        <title>Sequence and analysis of chromosome 1 of the plant Arabidopsis thaliana.</title>
        <authorList>
            <person name="Theologis A."/>
            <person name="Ecker J.R."/>
            <person name="Palm C.J."/>
            <person name="Federspiel N.A."/>
            <person name="Kaul S."/>
            <person name="White O."/>
            <person name="Alonso J."/>
            <person name="Altafi H."/>
            <person name="Araujo R."/>
            <person name="Bowman C.L."/>
            <person name="Brooks S.Y."/>
            <person name="Buehler E."/>
            <person name="Chan A."/>
            <person name="Chao Q."/>
            <person name="Chen H."/>
            <person name="Cheuk R.F."/>
            <person name="Chin C.W."/>
            <person name="Chung M.K."/>
            <person name="Conn L."/>
            <person name="Conway A.B."/>
            <person name="Conway A.R."/>
            <person name="Creasy T.H."/>
            <person name="Dewar K."/>
            <person name="Dunn P."/>
            <person name="Etgu P."/>
            <person name="Feldblyum T.V."/>
            <person name="Feng J.-D."/>
            <person name="Fong B."/>
            <person name="Fujii C.Y."/>
            <person name="Gill J.E."/>
            <person name="Goldsmith A.D."/>
            <person name="Haas B."/>
            <person name="Hansen N.F."/>
            <person name="Hughes B."/>
            <person name="Huizar L."/>
            <person name="Hunter J.L."/>
            <person name="Jenkins J."/>
            <person name="Johnson-Hopson C."/>
            <person name="Khan S."/>
            <person name="Khaykin E."/>
            <person name="Kim C.J."/>
            <person name="Koo H.L."/>
            <person name="Kremenetskaia I."/>
            <person name="Kurtz D.B."/>
            <person name="Kwan A."/>
            <person name="Lam B."/>
            <person name="Langin-Hooper S."/>
            <person name="Lee A."/>
            <person name="Lee J.M."/>
            <person name="Lenz C.A."/>
            <person name="Li J.H."/>
            <person name="Li Y.-P."/>
            <person name="Lin X."/>
            <person name="Liu S.X."/>
            <person name="Liu Z.A."/>
            <person name="Luros J.S."/>
            <person name="Maiti R."/>
            <person name="Marziali A."/>
            <person name="Militscher J."/>
            <person name="Miranda M."/>
            <person name="Nguyen M."/>
            <person name="Nierman W.C."/>
            <person name="Osborne B.I."/>
            <person name="Pai G."/>
            <person name="Peterson J."/>
            <person name="Pham P.K."/>
            <person name="Rizzo M."/>
            <person name="Rooney T."/>
            <person name="Rowley D."/>
            <person name="Sakano H."/>
            <person name="Salzberg S.L."/>
            <person name="Schwartz J.R."/>
            <person name="Shinn P."/>
            <person name="Southwick A.M."/>
            <person name="Sun H."/>
            <person name="Tallon L.J."/>
            <person name="Tambunga G."/>
            <person name="Toriumi M.J."/>
            <person name="Town C.D."/>
            <person name="Utterback T."/>
            <person name="Van Aken S."/>
            <person name="Vaysberg M."/>
            <person name="Vysotskaia V.S."/>
            <person name="Walker M."/>
            <person name="Wu D."/>
            <person name="Yu G."/>
            <person name="Fraser C.M."/>
            <person name="Venter J.C."/>
            <person name="Davis R.W."/>
        </authorList>
    </citation>
    <scope>NUCLEOTIDE SEQUENCE [LARGE SCALE GENOMIC DNA]</scope>
    <source>
        <strain>cv. Columbia</strain>
    </source>
</reference>
<reference key="3">
    <citation type="journal article" date="2017" name="Plant J.">
        <title>Araport11: a complete reannotation of the Arabidopsis thaliana reference genome.</title>
        <authorList>
            <person name="Cheng C.Y."/>
            <person name="Krishnakumar V."/>
            <person name="Chan A.P."/>
            <person name="Thibaud-Nissen F."/>
            <person name="Schobel S."/>
            <person name="Town C.D."/>
        </authorList>
    </citation>
    <scope>GENOME REANNOTATION</scope>
    <source>
        <strain>cv. Columbia</strain>
    </source>
</reference>
<reference key="4">
    <citation type="journal article" date="2001" name="Plant Cell">
        <title>Antisense expression of a cell wall-associated protein kinase, WAK4, inhibits cell elongation and alters morphology.</title>
        <authorList>
            <person name="Lally D."/>
            <person name="Ingmire P."/>
            <person name="Tong H.-Y."/>
            <person name="He Z.-H."/>
        </authorList>
    </citation>
    <scope>FUNCTION</scope>
</reference>
<reference key="5">
    <citation type="journal article" date="2002" name="Plant Physiol.">
        <title>The cell wall-associated kinase (WAK) and WAK-like kinase gene family.</title>
        <authorList>
            <person name="Verica J.A."/>
            <person name="He Z.-H."/>
        </authorList>
    </citation>
    <scope>GENE FAMILY ORGANIZATION</scope>
</reference>
<comment type="function">
    <text evidence="7">Serine/threonine-protein kinase that may function as a signaling receptor of extracellular matrix component. Binding to pectin may have significance in the control of cell expansion, morphogenesis and development.</text>
</comment>
<comment type="catalytic activity">
    <reaction>
        <text>L-seryl-[protein] + ATP = O-phospho-L-seryl-[protein] + ADP + H(+)</text>
        <dbReference type="Rhea" id="RHEA:17989"/>
        <dbReference type="Rhea" id="RHEA-COMP:9863"/>
        <dbReference type="Rhea" id="RHEA-COMP:11604"/>
        <dbReference type="ChEBI" id="CHEBI:15378"/>
        <dbReference type="ChEBI" id="CHEBI:29999"/>
        <dbReference type="ChEBI" id="CHEBI:30616"/>
        <dbReference type="ChEBI" id="CHEBI:83421"/>
        <dbReference type="ChEBI" id="CHEBI:456216"/>
    </reaction>
</comment>
<comment type="catalytic activity">
    <reaction>
        <text>L-threonyl-[protein] + ATP = O-phospho-L-threonyl-[protein] + ADP + H(+)</text>
        <dbReference type="Rhea" id="RHEA:46608"/>
        <dbReference type="Rhea" id="RHEA-COMP:11060"/>
        <dbReference type="Rhea" id="RHEA-COMP:11605"/>
        <dbReference type="ChEBI" id="CHEBI:15378"/>
        <dbReference type="ChEBI" id="CHEBI:30013"/>
        <dbReference type="ChEBI" id="CHEBI:30616"/>
        <dbReference type="ChEBI" id="CHEBI:61977"/>
        <dbReference type="ChEBI" id="CHEBI:456216"/>
    </reaction>
</comment>
<comment type="subcellular location">
    <subcellularLocation>
        <location evidence="8">Membrane</location>
        <topology evidence="8">Single-pass type I membrane protein</topology>
    </subcellularLocation>
</comment>
<comment type="tissue specificity">
    <text evidence="6">Strictly expressed in siliques.</text>
</comment>
<comment type="similarity">
    <text evidence="4">Belongs to the protein kinase superfamily. Ser/Thr protein kinase family.</text>
</comment>
<evidence type="ECO:0000250" key="1">
    <source>
        <dbReference type="UniProtKB" id="O48814"/>
    </source>
</evidence>
<evidence type="ECO:0000255" key="2"/>
<evidence type="ECO:0000255" key="3">
    <source>
        <dbReference type="PROSITE-ProRule" id="PRU00076"/>
    </source>
</evidence>
<evidence type="ECO:0000255" key="4">
    <source>
        <dbReference type="PROSITE-ProRule" id="PRU00159"/>
    </source>
</evidence>
<evidence type="ECO:0000255" key="5">
    <source>
        <dbReference type="PROSITE-ProRule" id="PRU10027"/>
    </source>
</evidence>
<evidence type="ECO:0000269" key="6">
    <source>
    </source>
</evidence>
<evidence type="ECO:0000269" key="7">
    <source>
    </source>
</evidence>
<evidence type="ECO:0000305" key="8"/>
<dbReference type="EC" id="2.7.11.-"/>
<dbReference type="EMBL" id="AJ009695">
    <property type="protein sequence ID" value="CAA08793.1"/>
    <property type="molecule type" value="Genomic_DNA"/>
</dbReference>
<dbReference type="EMBL" id="AC036104">
    <property type="protein sequence ID" value="AAF81361.1"/>
    <property type="molecule type" value="Genomic_DNA"/>
</dbReference>
<dbReference type="EMBL" id="CP002684">
    <property type="protein sequence ID" value="AEE30075.1"/>
    <property type="molecule type" value="Genomic_DNA"/>
</dbReference>
<dbReference type="PIR" id="D86345">
    <property type="entry name" value="D86345"/>
</dbReference>
<dbReference type="RefSeq" id="NP_173544.1">
    <property type="nucleotide sequence ID" value="NM_101974.3"/>
</dbReference>
<dbReference type="SMR" id="Q9LMN6"/>
<dbReference type="BioGRID" id="23955">
    <property type="interactions" value="8"/>
</dbReference>
<dbReference type="IntAct" id="Q9LMN6">
    <property type="interactions" value="8"/>
</dbReference>
<dbReference type="STRING" id="3702.Q9LMN6"/>
<dbReference type="GlyCosmos" id="Q9LMN6">
    <property type="glycosylation" value="9 sites, No reported glycans"/>
</dbReference>
<dbReference type="GlyGen" id="Q9LMN6">
    <property type="glycosylation" value="9 sites"/>
</dbReference>
<dbReference type="PaxDb" id="3702-AT1G21210.1"/>
<dbReference type="EnsemblPlants" id="AT1G21210.1">
    <property type="protein sequence ID" value="AT1G21210.1"/>
    <property type="gene ID" value="AT1G21210"/>
</dbReference>
<dbReference type="GeneID" id="838716"/>
<dbReference type="Gramene" id="AT1G21210.1">
    <property type="protein sequence ID" value="AT1G21210.1"/>
    <property type="gene ID" value="AT1G21210"/>
</dbReference>
<dbReference type="KEGG" id="ath:AT1G21210"/>
<dbReference type="Araport" id="AT1G21210"/>
<dbReference type="TAIR" id="AT1G21210">
    <property type="gene designation" value="WAK4"/>
</dbReference>
<dbReference type="eggNOG" id="ENOG502QQPF">
    <property type="taxonomic scope" value="Eukaryota"/>
</dbReference>
<dbReference type="HOGENOM" id="CLU_000288_43_5_1"/>
<dbReference type="InParanoid" id="Q9LMN6"/>
<dbReference type="OMA" id="WYIVRPY"/>
<dbReference type="PhylomeDB" id="Q9LMN6"/>
<dbReference type="PRO" id="PR:Q9LMN6"/>
<dbReference type="Proteomes" id="UP000006548">
    <property type="component" value="Chromosome 1"/>
</dbReference>
<dbReference type="ExpressionAtlas" id="Q9LMN6">
    <property type="expression patterns" value="baseline and differential"/>
</dbReference>
<dbReference type="GO" id="GO:0016020">
    <property type="term" value="C:membrane"/>
    <property type="evidence" value="ECO:0007669"/>
    <property type="project" value="UniProtKB-SubCell"/>
</dbReference>
<dbReference type="GO" id="GO:0005524">
    <property type="term" value="F:ATP binding"/>
    <property type="evidence" value="ECO:0007669"/>
    <property type="project" value="UniProtKB-KW"/>
</dbReference>
<dbReference type="GO" id="GO:0005509">
    <property type="term" value="F:calcium ion binding"/>
    <property type="evidence" value="ECO:0007669"/>
    <property type="project" value="InterPro"/>
</dbReference>
<dbReference type="GO" id="GO:0030247">
    <property type="term" value="F:polysaccharide binding"/>
    <property type="evidence" value="ECO:0007669"/>
    <property type="project" value="InterPro"/>
</dbReference>
<dbReference type="GO" id="GO:0106310">
    <property type="term" value="F:protein serine kinase activity"/>
    <property type="evidence" value="ECO:0007669"/>
    <property type="project" value="RHEA"/>
</dbReference>
<dbReference type="GO" id="GO:0004674">
    <property type="term" value="F:protein serine/threonine kinase activity"/>
    <property type="evidence" value="ECO:0007669"/>
    <property type="project" value="UniProtKB-KW"/>
</dbReference>
<dbReference type="GO" id="GO:0007166">
    <property type="term" value="P:cell surface receptor signaling pathway"/>
    <property type="evidence" value="ECO:0007669"/>
    <property type="project" value="InterPro"/>
</dbReference>
<dbReference type="GO" id="GO:0048527">
    <property type="term" value="P:lateral root development"/>
    <property type="evidence" value="ECO:0000315"/>
    <property type="project" value="TAIR"/>
</dbReference>
<dbReference type="GO" id="GO:0009826">
    <property type="term" value="P:unidimensional cell growth"/>
    <property type="evidence" value="ECO:0000315"/>
    <property type="project" value="TAIR"/>
</dbReference>
<dbReference type="CDD" id="cd00054">
    <property type="entry name" value="EGF_CA"/>
    <property type="match status" value="1"/>
</dbReference>
<dbReference type="CDD" id="cd14066">
    <property type="entry name" value="STKc_IRAK"/>
    <property type="match status" value="1"/>
</dbReference>
<dbReference type="FunFam" id="1.10.510.10:FF:000084">
    <property type="entry name" value="Wall-associated receptor kinase 2"/>
    <property type="match status" value="1"/>
</dbReference>
<dbReference type="FunFam" id="3.30.200.20:FF:000043">
    <property type="entry name" value="Wall-associated receptor kinase 2"/>
    <property type="match status" value="1"/>
</dbReference>
<dbReference type="Gene3D" id="2.10.25.10">
    <property type="entry name" value="Laminin"/>
    <property type="match status" value="2"/>
</dbReference>
<dbReference type="Gene3D" id="3.30.200.20">
    <property type="entry name" value="Phosphorylase Kinase, domain 1"/>
    <property type="match status" value="1"/>
</dbReference>
<dbReference type="Gene3D" id="1.10.510.10">
    <property type="entry name" value="Transferase(Phosphotransferase) domain 1"/>
    <property type="match status" value="1"/>
</dbReference>
<dbReference type="InterPro" id="IPR001881">
    <property type="entry name" value="EGF-like_Ca-bd_dom"/>
</dbReference>
<dbReference type="InterPro" id="IPR000742">
    <property type="entry name" value="EGF-like_dom"/>
</dbReference>
<dbReference type="InterPro" id="IPR000152">
    <property type="entry name" value="EGF-type_Asp/Asn_hydroxyl_site"/>
</dbReference>
<dbReference type="InterPro" id="IPR018097">
    <property type="entry name" value="EGF_Ca-bd_CS"/>
</dbReference>
<dbReference type="InterPro" id="IPR011009">
    <property type="entry name" value="Kinase-like_dom_sf"/>
</dbReference>
<dbReference type="InterPro" id="IPR049883">
    <property type="entry name" value="NOTCH1_EGF-like"/>
</dbReference>
<dbReference type="InterPro" id="IPR000719">
    <property type="entry name" value="Prot_kinase_dom"/>
</dbReference>
<dbReference type="InterPro" id="IPR001245">
    <property type="entry name" value="Ser-Thr/Tyr_kinase_cat_dom"/>
</dbReference>
<dbReference type="InterPro" id="IPR008271">
    <property type="entry name" value="Ser/Thr_kinase_AS"/>
</dbReference>
<dbReference type="InterPro" id="IPR045274">
    <property type="entry name" value="WAK-like"/>
</dbReference>
<dbReference type="InterPro" id="IPR025287">
    <property type="entry name" value="WAK_GUB"/>
</dbReference>
<dbReference type="PANTHER" id="PTHR27005:SF524">
    <property type="entry name" value="WALL-ASSOCIATED RECEPTOR KINASE 2-RELATED"/>
    <property type="match status" value="1"/>
</dbReference>
<dbReference type="PANTHER" id="PTHR27005">
    <property type="entry name" value="WALL-ASSOCIATED RECEPTOR KINASE-LIKE 21"/>
    <property type="match status" value="1"/>
</dbReference>
<dbReference type="Pfam" id="PF07645">
    <property type="entry name" value="EGF_CA"/>
    <property type="match status" value="1"/>
</dbReference>
<dbReference type="Pfam" id="PF13947">
    <property type="entry name" value="GUB_WAK_bind"/>
    <property type="match status" value="1"/>
</dbReference>
<dbReference type="Pfam" id="PF07714">
    <property type="entry name" value="PK_Tyr_Ser-Thr"/>
    <property type="match status" value="1"/>
</dbReference>
<dbReference type="SMART" id="SM00181">
    <property type="entry name" value="EGF"/>
    <property type="match status" value="2"/>
</dbReference>
<dbReference type="SMART" id="SM00179">
    <property type="entry name" value="EGF_CA"/>
    <property type="match status" value="1"/>
</dbReference>
<dbReference type="SMART" id="SM00220">
    <property type="entry name" value="S_TKc"/>
    <property type="match status" value="1"/>
</dbReference>
<dbReference type="SUPFAM" id="SSF57196">
    <property type="entry name" value="EGF/Laminin"/>
    <property type="match status" value="1"/>
</dbReference>
<dbReference type="SUPFAM" id="SSF56112">
    <property type="entry name" value="Protein kinase-like (PK-like)"/>
    <property type="match status" value="1"/>
</dbReference>
<dbReference type="PROSITE" id="PS00010">
    <property type="entry name" value="ASX_HYDROXYL"/>
    <property type="match status" value="1"/>
</dbReference>
<dbReference type="PROSITE" id="PS50026">
    <property type="entry name" value="EGF_3"/>
    <property type="match status" value="2"/>
</dbReference>
<dbReference type="PROSITE" id="PS01187">
    <property type="entry name" value="EGF_CA"/>
    <property type="match status" value="1"/>
</dbReference>
<dbReference type="PROSITE" id="PS50011">
    <property type="entry name" value="PROTEIN_KINASE_DOM"/>
    <property type="match status" value="1"/>
</dbReference>
<dbReference type="PROSITE" id="PS00108">
    <property type="entry name" value="PROTEIN_KINASE_ST"/>
    <property type="match status" value="1"/>
</dbReference>
<gene>
    <name type="primary">WAK4</name>
    <name type="ordered locus">At1g21210</name>
    <name type="ORF">F16F4.10</name>
</gene>
<name>WAK4_ARATH</name>
<feature type="signal peptide" evidence="2">
    <location>
        <begin position="1"/>
        <end position="22"/>
    </location>
</feature>
<feature type="chain" id="PRO_0000253303" description="Wall-associated receptor kinase 4">
    <location>
        <begin position="23"/>
        <end position="738"/>
    </location>
</feature>
<feature type="topological domain" description="Extracellular" evidence="2">
    <location>
        <begin position="23"/>
        <end position="335"/>
    </location>
</feature>
<feature type="transmembrane region" description="Helical" evidence="2">
    <location>
        <begin position="336"/>
        <end position="356"/>
    </location>
</feature>
<feature type="topological domain" description="Cytoplasmic" evidence="2">
    <location>
        <begin position="357"/>
        <end position="738"/>
    </location>
</feature>
<feature type="domain" description="EGF-like 1" evidence="3">
    <location>
        <begin position="232"/>
        <end position="278"/>
    </location>
</feature>
<feature type="domain" description="EGF-like 2; calcium-binding" evidence="3">
    <location>
        <begin position="279"/>
        <end position="325"/>
    </location>
</feature>
<feature type="domain" description="Protein kinase" evidence="4">
    <location>
        <begin position="410"/>
        <end position="693"/>
    </location>
</feature>
<feature type="active site" description="Proton acceptor" evidence="4 5">
    <location>
        <position position="535"/>
    </location>
</feature>
<feature type="binding site" evidence="4">
    <location>
        <begin position="416"/>
        <end position="424"/>
    </location>
    <ligand>
        <name>ATP</name>
        <dbReference type="ChEBI" id="CHEBI:30616"/>
    </ligand>
</feature>
<feature type="binding site" evidence="4">
    <location>
        <position position="438"/>
    </location>
    <ligand>
        <name>ATP</name>
        <dbReference type="ChEBI" id="CHEBI:30616"/>
    </ligand>
</feature>
<feature type="modified residue" description="Phosphothreonine" evidence="1">
    <location>
        <position position="399"/>
    </location>
</feature>
<feature type="modified residue" description="Phosphotyrosine" evidence="1">
    <location>
        <position position="483"/>
    </location>
</feature>
<feature type="modified residue" description="Phosphothreonine" evidence="1">
    <location>
        <position position="569"/>
    </location>
</feature>
<feature type="modified residue" description="Phosphothreonine" evidence="1">
    <location>
        <position position="574"/>
    </location>
</feature>
<feature type="modified residue" description="Phosphotyrosine" evidence="1">
    <location>
        <position position="582"/>
    </location>
</feature>
<feature type="glycosylation site" description="N-linked (GlcNAc...) asparagine" evidence="2">
    <location>
        <position position="34"/>
    </location>
</feature>
<feature type="glycosylation site" description="N-linked (GlcNAc...) asparagine" evidence="2">
    <location>
        <position position="56"/>
    </location>
</feature>
<feature type="glycosylation site" description="N-linked (GlcNAc...) asparagine" evidence="2">
    <location>
        <position position="109"/>
    </location>
</feature>
<feature type="glycosylation site" description="N-linked (GlcNAc...) asparagine" evidence="2">
    <location>
        <position position="115"/>
    </location>
</feature>
<feature type="glycosylation site" description="N-linked (GlcNAc...) asparagine" evidence="2">
    <location>
        <position position="132"/>
    </location>
</feature>
<feature type="glycosylation site" description="N-linked (GlcNAc...) asparagine" evidence="2">
    <location>
        <position position="182"/>
    </location>
</feature>
<feature type="glycosylation site" description="N-linked (GlcNAc...) asparagine" evidence="2">
    <location>
        <position position="208"/>
    </location>
</feature>
<feature type="glycosylation site" description="N-linked (GlcNAc...) asparagine" evidence="2">
    <location>
        <position position="293"/>
    </location>
</feature>
<feature type="glycosylation site" description="N-linked (GlcNAc...) asparagine" evidence="2">
    <location>
        <position position="318"/>
    </location>
</feature>
<feature type="disulfide bond" evidence="3">
    <location>
        <begin position="236"/>
        <end position="250"/>
    </location>
</feature>
<feature type="disulfide bond" evidence="3">
    <location>
        <begin position="244"/>
        <end position="261"/>
    </location>
</feature>
<feature type="disulfide bond" evidence="3">
    <location>
        <begin position="263"/>
        <end position="277"/>
    </location>
</feature>
<feature type="disulfide bond" evidence="3">
    <location>
        <begin position="283"/>
        <end position="300"/>
    </location>
</feature>
<feature type="disulfide bond" evidence="3">
    <location>
        <begin position="294"/>
        <end position="309"/>
    </location>
</feature>
<feature type="disulfide bond" evidence="3">
    <location>
        <begin position="311"/>
        <end position="324"/>
    </location>
</feature>
<accession>Q9LMN6</accession>
<accession>O81819</accession>
<sequence length="738" mass="81704">MKVQRLFLVAIFCLSYMQLVKGQTLPRCPEKCGNVTLEYPFGFSPGCWRAEDPSFNLSCVNENLFYKGLEVVEISHSSQLRVLYPASYICYNSKGKFAKGTYYWSNLGNLTLSGNNTITALGCNSYAFVSSNGTRRNSVGCISACDALSHEANGECNGEGCCQNPVPAGNNWLIVRSYRFDNDTSVQPISEGQCIYAFLVENGKFKYNASDKYSYLQNRNVGFPVVLDWSIRGETCGQVGEKKCGVNGICSNSASGIGYTCKCKGGFQGNPYLQNGCQDINECTTANPIHKHNCSGDSTCENKLGHFRCNCRSRYELNTTTNTCKPKGNPEYVEWTTIVLGTTIGFLVILLAISCIEHKMKNTKDTELRQQFFEQNGGGMLMQRLSGAGPSNVDVKIFTEEGMKEATDGYDENRILGQGGQGTVYKGILPDNSIVAIKKARLGDNSQVEQFINEVLVLSQINHRNVVKLLGCCLETEVPLLVYEFISSGTLFDHLHGSMFDSSLTWEHRLRMAVEIAGTLAYLHSSASIPIIHRDIKTANILLDENLTAKVADFGASRLIPMDKEDLATMVQGTLGYLDPEYYNTGLLNEKSDVYSFGVVLMELLSGQKALCFERPQTSKHIVSYFASATKENRLHEIIDGQVMNENNQREIQKAARIAVECTRLTGEERPGMKEVAAELEALRVTKTKHKWSDEYPEQEDTEHLVGVQKLSAQGETSSSIGYDSIRNVAILDIEAGR</sequence>
<proteinExistence type="evidence at transcript level"/>